<name>ENLYS_BPMU</name>
<protein>
    <recommendedName>
        <fullName evidence="2">SAR-endolysin</fullName>
        <ecNumber evidence="2">3.2.1.17</ecNumber>
    </recommendedName>
    <alternativeName>
        <fullName evidence="2">Endolysin</fullName>
    </alternativeName>
    <alternativeName>
        <fullName>Gene product 22</fullName>
        <shortName>gp22</shortName>
    </alternativeName>
    <alternativeName>
        <fullName evidence="2">Lysis protein</fullName>
    </alternativeName>
    <alternativeName>
        <fullName evidence="2">Lysozyme</fullName>
    </alternativeName>
    <alternativeName>
        <fullName evidence="2">Muramidase</fullName>
    </alternativeName>
</protein>
<organism>
    <name type="scientific">Escherichia phage Mu</name>
    <name type="common">Bacteriophage Mu</name>
    <dbReference type="NCBI Taxonomy" id="2681603"/>
    <lineage>
        <taxon>Viruses</taxon>
        <taxon>Duplodnaviria</taxon>
        <taxon>Heunggongvirae</taxon>
        <taxon>Uroviricota</taxon>
        <taxon>Caudoviricetes</taxon>
        <taxon>Muvirus</taxon>
        <taxon>Muvirus mu</taxon>
    </lineage>
</organism>
<keyword id="KW-0929">Antimicrobial</keyword>
<keyword id="KW-0081">Bacteriolytic enzyme</keyword>
<keyword id="KW-0204">Cytolysis</keyword>
<keyword id="KW-0326">Glycosidase</keyword>
<keyword id="KW-1030">Host cell inner membrane</keyword>
<keyword id="KW-0578">Host cell lysis by virus</keyword>
<keyword id="KW-1032">Host cell membrane</keyword>
<keyword id="KW-1043">Host membrane</keyword>
<keyword id="KW-0378">Hydrolase</keyword>
<keyword id="KW-0472">Membrane</keyword>
<keyword id="KW-1185">Reference proteome</keyword>
<keyword id="KW-0735">Signal-anchor</keyword>
<keyword id="KW-0812">Transmembrane</keyword>
<keyword id="KW-1133">Transmembrane helix</keyword>
<keyword id="KW-1188">Viral release from host cell</keyword>
<dbReference type="EC" id="3.2.1.17" evidence="2"/>
<dbReference type="EMBL" id="AF083977">
    <property type="protein sequence ID" value="AAF01099.1"/>
    <property type="molecule type" value="Genomic_DNA"/>
</dbReference>
<dbReference type="RefSeq" id="NP_050626.1">
    <property type="nucleotide sequence ID" value="NC_000929.1"/>
</dbReference>
<dbReference type="SMR" id="Q9T1X2"/>
<dbReference type="CAZy" id="GH24">
    <property type="family name" value="Glycoside Hydrolase Family 24"/>
</dbReference>
<dbReference type="GeneID" id="2636261"/>
<dbReference type="KEGG" id="vg:2636261"/>
<dbReference type="Proteomes" id="UP000002611">
    <property type="component" value="Genome"/>
</dbReference>
<dbReference type="GO" id="GO:0020002">
    <property type="term" value="C:host cell plasma membrane"/>
    <property type="evidence" value="ECO:0007669"/>
    <property type="project" value="UniProtKB-SubCell"/>
</dbReference>
<dbReference type="GO" id="GO:0016020">
    <property type="term" value="C:membrane"/>
    <property type="evidence" value="ECO:0007669"/>
    <property type="project" value="UniProtKB-KW"/>
</dbReference>
<dbReference type="GO" id="GO:0003796">
    <property type="term" value="F:lysozyme activity"/>
    <property type="evidence" value="ECO:0007669"/>
    <property type="project" value="UniProtKB-EC"/>
</dbReference>
<dbReference type="GO" id="GO:0016998">
    <property type="term" value="P:cell wall macromolecule catabolic process"/>
    <property type="evidence" value="ECO:0007669"/>
    <property type="project" value="InterPro"/>
</dbReference>
<dbReference type="GO" id="GO:0042742">
    <property type="term" value="P:defense response to bacterium"/>
    <property type="evidence" value="ECO:0007669"/>
    <property type="project" value="UniProtKB-KW"/>
</dbReference>
<dbReference type="GO" id="GO:0009253">
    <property type="term" value="P:peptidoglycan catabolic process"/>
    <property type="evidence" value="ECO:0007669"/>
    <property type="project" value="InterPro"/>
</dbReference>
<dbReference type="GO" id="GO:0044659">
    <property type="term" value="P:viral release from host cell by cytolysis"/>
    <property type="evidence" value="ECO:0000314"/>
    <property type="project" value="UniProtKB"/>
</dbReference>
<dbReference type="CDD" id="cd16900">
    <property type="entry name" value="endolysin_R21-like"/>
    <property type="match status" value="1"/>
</dbReference>
<dbReference type="Gene3D" id="1.10.530.40">
    <property type="match status" value="1"/>
</dbReference>
<dbReference type="HAMAP" id="MF_04110">
    <property type="entry name" value="ENDOLYSIN_T4"/>
    <property type="match status" value="1"/>
</dbReference>
<dbReference type="HAMAP" id="MF_04136">
    <property type="entry name" value="SAR_ENDOLYSIN"/>
    <property type="match status" value="1"/>
</dbReference>
<dbReference type="InterPro" id="IPR051018">
    <property type="entry name" value="Bacteriophage_GH24"/>
</dbReference>
<dbReference type="InterPro" id="IPR034690">
    <property type="entry name" value="Endolysin_T4_type"/>
</dbReference>
<dbReference type="InterPro" id="IPR002196">
    <property type="entry name" value="Glyco_hydro_24"/>
</dbReference>
<dbReference type="InterPro" id="IPR023346">
    <property type="entry name" value="Lysozyme-like_dom_sf"/>
</dbReference>
<dbReference type="InterPro" id="IPR023347">
    <property type="entry name" value="Lysozyme_dom_sf"/>
</dbReference>
<dbReference type="InterPro" id="IPR043688">
    <property type="entry name" value="SAR_endolysin-like"/>
</dbReference>
<dbReference type="PANTHER" id="PTHR38107">
    <property type="match status" value="1"/>
</dbReference>
<dbReference type="PANTHER" id="PTHR38107:SF3">
    <property type="entry name" value="LYSOZYME RRRD-RELATED"/>
    <property type="match status" value="1"/>
</dbReference>
<dbReference type="Pfam" id="PF00959">
    <property type="entry name" value="Phage_lysozyme"/>
    <property type="match status" value="1"/>
</dbReference>
<dbReference type="SUPFAM" id="SSF53955">
    <property type="entry name" value="Lysozyme-like"/>
    <property type="match status" value="1"/>
</dbReference>
<feature type="chain" id="PRO_0000218096" description="SAR-endolysin">
    <location>
        <begin position="1"/>
        <end position="171"/>
    </location>
</feature>
<feature type="transmembrane region" description="Helical; Signal-anchor for type II membrane protein" evidence="1">
    <location>
        <begin position="1"/>
        <end position="24"/>
    </location>
</feature>
<feature type="active site" description="Proton donor/acceptor" evidence="2">
    <location>
        <position position="37"/>
    </location>
</feature>
<feature type="active site" description="Proton donor/acceptor" evidence="2">
    <location>
        <position position="46"/>
    </location>
</feature>
<feature type="mutagenesis site" description="Complete loss of enzymatic activity." evidence="4">
    <original>E</original>
    <variation>A</variation>
    <location>
        <position position="37"/>
    </location>
</feature>
<accession>Q9T1X2</accession>
<sequence>MAGIPKKLKAALLAVTIAGGGVGGYQEMTRQSLIHLENIAYMPYRDIAGVLTVCVGHTGPDIEMRRYSHAECMALLDSDLKPVYAAIDRLVRVPLTPYQKTALATFIFNTGVTAFSKSTLLKKLNAGDYAGARDQMARWVFAAGHKWKGLMNRREVEMAIWNIRGADDLRQ</sequence>
<reference key="1">
    <citation type="journal article" date="2002" name="J. Mol. Biol.">
        <title>Bacteriophage Mu genome sequence: analysis and comparison with Mu-like prophages in Haemophilus, Neisseria and Deinococcus.</title>
        <authorList>
            <person name="Morgan G.J."/>
            <person name="Hatfull G.F."/>
            <person name="Casjens S."/>
            <person name="Hendrix R.W."/>
        </authorList>
    </citation>
    <scope>NUCLEOTIDE SEQUENCE [LARGE SCALE GENOMIC DNA]</scope>
</reference>
<reference key="2">
    <citation type="journal article" date="1989" name="J. Bacteriol.">
        <title>Localization and regulation of bacteriophage Mu promoters.</title>
        <authorList>
            <person name="Stoddard S.F."/>
            <person name="Howe M.M."/>
        </authorList>
    </citation>
    <scope>INDUCTION</scope>
</reference>
<reference key="3">
    <citation type="journal article" date="2022" name="MBio">
        <title>Endolysin Regulation in Phage Mu Lysis.</title>
        <authorList>
            <person name="Chamblee J.S."/>
            <person name="Ramsey J."/>
            <person name="Chen Y."/>
            <person name="Maddox L.T."/>
            <person name="Ross C."/>
            <person name="To K.H."/>
            <person name="Cahill J.L."/>
            <person name="Young R."/>
        </authorList>
    </citation>
    <scope>FUNCTION</scope>
    <scope>MUTAGENESIS OF GLU-37</scope>
</reference>
<comment type="function">
    <text evidence="2 4">Signal-arrest-release (SAR) endolysin with lysozyme activity that degrades host peptidoglycans and participates with the releasin and spanin proteins in the sequential events which lead to programmed host cell lysis releasing the mature viral particles. The SAR-endolysin is released by the releasin protein into the periplasm, where it breaks down the peptidoglycan layer.</text>
</comment>
<comment type="catalytic activity">
    <reaction evidence="2">
        <text>Hydrolysis of (1-&gt;4)-beta-linkages between N-acetylmuramic acid and N-acetyl-D-glucosamine residues in a peptidoglycan and between N-acetyl-D-glucosamine residues in chitodextrins.</text>
        <dbReference type="EC" id="3.2.1.17"/>
    </reaction>
</comment>
<comment type="subcellular location">
    <subcellularLocation>
        <location evidence="2">Host cell inner membrane</location>
        <topology evidence="2">Single-pass type II membrane protein</topology>
        <orientation evidence="2">Periplasmic side</orientation>
    </subcellularLocation>
    <text evidence="2">Secreted as a signal-anchored, membrane-tethered, inactive endolysin which is subsequently refolded, activated and released by membrane depolarization driven by the pinholin.</text>
</comment>
<comment type="induction">
    <text evidence="3">Expressed in the intermediate phase of the viral replicative cycle.</text>
</comment>
<comment type="domain">
    <text evidence="2">The signal-anchor, which may also be an uncleaved signal sequence tethers the SAR-endolysin to the membrane until the latter is depolarized by the holin, resulting in the escape of SAR-endolysin from the membrane.</text>
</comment>
<comment type="similarity">
    <text evidence="2">Belongs to the glycosyl hydrolase 24 family.</text>
</comment>
<gene>
    <name type="primary">lys</name>
    <name type="ordered locus">Mup22</name>
</gene>
<organismHost>
    <name type="scientific">Enterobacteriaceae</name>
    <dbReference type="NCBI Taxonomy" id="543"/>
</organismHost>
<proteinExistence type="evidence at protein level"/>
<evidence type="ECO:0000255" key="1"/>
<evidence type="ECO:0000255" key="2">
    <source>
        <dbReference type="HAMAP-Rule" id="MF_04136"/>
    </source>
</evidence>
<evidence type="ECO:0000269" key="3">
    <source>
    </source>
</evidence>
<evidence type="ECO:0000269" key="4">
    <source>
    </source>
</evidence>